<comment type="function">
    <text evidence="1">This protein is located at the 30S-50S ribosomal subunit interface and may play a role in the structure and function of the aminoacyl-tRNA binding site.</text>
</comment>
<comment type="similarity">
    <text evidence="1">Belongs to the bacterial ribosomal protein bL19 family.</text>
</comment>
<gene>
    <name evidence="1" type="primary">rplS</name>
    <name type="ordered locus">ECH74115_3845</name>
</gene>
<dbReference type="EMBL" id="CP001164">
    <property type="protein sequence ID" value="ACI37770.1"/>
    <property type="molecule type" value="Genomic_DNA"/>
</dbReference>
<dbReference type="RefSeq" id="WP_000065253.1">
    <property type="nucleotide sequence ID" value="NC_011353.1"/>
</dbReference>
<dbReference type="SMR" id="B5Z225"/>
<dbReference type="GeneID" id="93774456"/>
<dbReference type="KEGG" id="ecf:ECH74115_3845"/>
<dbReference type="HOGENOM" id="CLU_103507_2_1_6"/>
<dbReference type="GO" id="GO:0022625">
    <property type="term" value="C:cytosolic large ribosomal subunit"/>
    <property type="evidence" value="ECO:0007669"/>
    <property type="project" value="TreeGrafter"/>
</dbReference>
<dbReference type="GO" id="GO:0003735">
    <property type="term" value="F:structural constituent of ribosome"/>
    <property type="evidence" value="ECO:0007669"/>
    <property type="project" value="InterPro"/>
</dbReference>
<dbReference type="GO" id="GO:0006412">
    <property type="term" value="P:translation"/>
    <property type="evidence" value="ECO:0007669"/>
    <property type="project" value="UniProtKB-UniRule"/>
</dbReference>
<dbReference type="FunFam" id="2.30.30.790:FF:000001">
    <property type="entry name" value="50S ribosomal protein L19"/>
    <property type="match status" value="1"/>
</dbReference>
<dbReference type="Gene3D" id="2.30.30.790">
    <property type="match status" value="1"/>
</dbReference>
<dbReference type="HAMAP" id="MF_00402">
    <property type="entry name" value="Ribosomal_bL19"/>
    <property type="match status" value="1"/>
</dbReference>
<dbReference type="InterPro" id="IPR001857">
    <property type="entry name" value="Ribosomal_bL19"/>
</dbReference>
<dbReference type="InterPro" id="IPR018257">
    <property type="entry name" value="Ribosomal_bL19_CS"/>
</dbReference>
<dbReference type="InterPro" id="IPR038657">
    <property type="entry name" value="Ribosomal_bL19_sf"/>
</dbReference>
<dbReference type="InterPro" id="IPR008991">
    <property type="entry name" value="Translation_prot_SH3-like_sf"/>
</dbReference>
<dbReference type="NCBIfam" id="TIGR01024">
    <property type="entry name" value="rplS_bact"/>
    <property type="match status" value="1"/>
</dbReference>
<dbReference type="PANTHER" id="PTHR15680:SF9">
    <property type="entry name" value="LARGE RIBOSOMAL SUBUNIT PROTEIN BL19M"/>
    <property type="match status" value="1"/>
</dbReference>
<dbReference type="PANTHER" id="PTHR15680">
    <property type="entry name" value="RIBOSOMAL PROTEIN L19"/>
    <property type="match status" value="1"/>
</dbReference>
<dbReference type="Pfam" id="PF01245">
    <property type="entry name" value="Ribosomal_L19"/>
    <property type="match status" value="1"/>
</dbReference>
<dbReference type="PIRSF" id="PIRSF002191">
    <property type="entry name" value="Ribosomal_L19"/>
    <property type="match status" value="1"/>
</dbReference>
<dbReference type="PRINTS" id="PR00061">
    <property type="entry name" value="RIBOSOMALL19"/>
</dbReference>
<dbReference type="SUPFAM" id="SSF50104">
    <property type="entry name" value="Translation proteins SH3-like domain"/>
    <property type="match status" value="1"/>
</dbReference>
<dbReference type="PROSITE" id="PS01015">
    <property type="entry name" value="RIBOSOMAL_L19"/>
    <property type="match status" value="1"/>
</dbReference>
<protein>
    <recommendedName>
        <fullName evidence="1">Large ribosomal subunit protein bL19</fullName>
    </recommendedName>
    <alternativeName>
        <fullName evidence="2">50S ribosomal protein L19</fullName>
    </alternativeName>
</protein>
<proteinExistence type="inferred from homology"/>
<feature type="chain" id="PRO_1000193834" description="Large ribosomal subunit protein bL19">
    <location>
        <begin position="1"/>
        <end position="115"/>
    </location>
</feature>
<organism>
    <name type="scientific">Escherichia coli O157:H7 (strain EC4115 / EHEC)</name>
    <dbReference type="NCBI Taxonomy" id="444450"/>
    <lineage>
        <taxon>Bacteria</taxon>
        <taxon>Pseudomonadati</taxon>
        <taxon>Pseudomonadota</taxon>
        <taxon>Gammaproteobacteria</taxon>
        <taxon>Enterobacterales</taxon>
        <taxon>Enterobacteriaceae</taxon>
        <taxon>Escherichia</taxon>
    </lineage>
</organism>
<evidence type="ECO:0000255" key="1">
    <source>
        <dbReference type="HAMAP-Rule" id="MF_00402"/>
    </source>
</evidence>
<evidence type="ECO:0000305" key="2"/>
<keyword id="KW-0687">Ribonucleoprotein</keyword>
<keyword id="KW-0689">Ribosomal protein</keyword>
<sequence>MSNIIKQLEQEQMKQDVPSFRPGDTVEVKVWVVEGSKKRLQAFEGVVIAIRNRGLHSAFTVRKISNGEGVERVFQTHSPVVDSISVKRRGAVRKAKLYYLRERTGKAARIKERLN</sequence>
<name>RL19_ECO5E</name>
<reference key="1">
    <citation type="journal article" date="2011" name="Proc. Natl. Acad. Sci. U.S.A.">
        <title>Genomic anatomy of Escherichia coli O157:H7 outbreaks.</title>
        <authorList>
            <person name="Eppinger M."/>
            <person name="Mammel M.K."/>
            <person name="Leclerc J.E."/>
            <person name="Ravel J."/>
            <person name="Cebula T.A."/>
        </authorList>
    </citation>
    <scope>NUCLEOTIDE SEQUENCE [LARGE SCALE GENOMIC DNA]</scope>
    <source>
        <strain>EC4115 / EHEC</strain>
    </source>
</reference>
<accession>B5Z225</accession>